<organism>
    <name type="scientific">Francisella tularensis subsp. novicida (strain U112)</name>
    <dbReference type="NCBI Taxonomy" id="401614"/>
    <lineage>
        <taxon>Bacteria</taxon>
        <taxon>Pseudomonadati</taxon>
        <taxon>Pseudomonadota</taxon>
        <taxon>Gammaproteobacteria</taxon>
        <taxon>Thiotrichales</taxon>
        <taxon>Francisellaceae</taxon>
        <taxon>Francisella</taxon>
    </lineage>
</organism>
<sequence length="1300" mass="151915">MSIYQEFVNKYSLSKTLRFELIPQGKTLENIKARGLILDDEKRAKDYKKAKQIIDKYHQFFIEEILSSVCISEDLLQNYSDVYFKLKKSDDDNLQKDFKSAKDTIKKQISEYIKDSEKFKNLFNQNLIDAKKGQESDLILWLKQSKDNGIELFKANSDITDIDEALEIIKSFKGWTTYFKGFHENRKNVYSSNDIPTSIIYRIVDDNLPKFLENKAKYESLKDKAPEAINYEQIKKDLAEELTFDIDYKTSEVNQRVFSLDEVFEIANFNNYLNQSGITKFNTIIGGKFVNGENTKRKGINEYINLYSQQINDKTLKKYKMSVLFKQILSDTESKSFVIDKLEDDSDVVTTMQSFYEQIAAFKTVEEKSIKETLSLLFDDLKAQKLDLSKIYFKNDKSLTDLSQQVFDDYSVIGTAVLEYITQQIAPKNLDNPSKKEQELIAKKTEKAKYLSLETIKLALEEFNKHRDIDKQCRFEEILANFAAIPMIFDEIAQNKDNLAQISIKYQNQGKKDLLQASAEDDVKAIKDLLDQTNNLLHKLKIFHISQSEDKANILDKDEHFYLVFEECYFELANIVPLYNKIRNYITQKPYSDEKFKLNFENSTLANGWDKNKEPDNTAILFIKDDKYYLGVMNKKNNKIFDDKAIKENKGEGYKKIVYKLLPGANKMLPKVFFSAKSIKFYNPSEDILRIRNHSTHTKNGSPQKGYEKFEFNIEDCRKFIDFYKQSISKHPEWKDFGFRFSDTQRYNSIDEFYREVENQGYKLTFENISESYIDSVVNQGKLYLFQIYNKDFSAYSKGRPNLHTLYWKALFDERNLQDVVYKLNGEAELFYRKQSIPKKITHPAKEAIANKNKDNPKKESVFEYDLIKDKRFTEDKFFFHCPITINFKSSGANKFNDEINLLLKEKANDVHILSIDRGERHLAYYTLVDGKGNIIKQDTFNIIGNDRMKTNYHDKLAAIEKDRDSARKDWKKINNIKEMKEGYLSQVVHEIAKLVIEYNAIVVFEDLNFGFKRGRFKVEKQVYQKLEKMLIEKLNYLVFKDNEFDKTGGVLRAYQLTAPFETFKKMGKQTGIIYYVPAGFTSKICPVTGFVNQLYPKYESVSKSQEFFSKFDKICYNLDKGYFEFSFDYKNFGDKAAKGKWTIASFGSRLINFRNSDKNHNWDTREVYPTKELEKLLKDYSIEYGHGECIKAAICGESDKKFFAKLTSVLNTILQMRNSKTGTELDYLISPVADVNGNFFDSRQAPKNMPQDADANGAYHIGLKGLMLLGRIKNNQEGKKLNLVIKNEEYFEFVQNRNN</sequence>
<accession>A0Q7Q2</accession>
<gene>
    <name evidence="9" type="primary">cas12a</name>
    <name evidence="8" type="synonym">cpf1</name>
    <name type="ordered locus">FTN_1397</name>
</gene>
<evidence type="ECO:0000269" key="1">
    <source>
    </source>
</evidence>
<evidence type="ECO:0000269" key="2">
    <source>
    </source>
</evidence>
<evidence type="ECO:0000269" key="3">
    <source>
    </source>
</evidence>
<evidence type="ECO:0000269" key="4">
    <source>
    </source>
</evidence>
<evidence type="ECO:0000269" key="5">
    <source>
    </source>
</evidence>
<evidence type="ECO:0000269" key="6">
    <source>
    </source>
</evidence>
<evidence type="ECO:0000269" key="7">
    <source>
    </source>
</evidence>
<evidence type="ECO:0000303" key="8">
    <source>
    </source>
</evidence>
<evidence type="ECO:0000303" key="9">
    <source>
    </source>
</evidence>
<evidence type="ECO:0000303" key="10">
    <source>
    </source>
</evidence>
<evidence type="ECO:0000303" key="11">
    <source>
    </source>
</evidence>
<evidence type="ECO:0000305" key="12">
    <source>
    </source>
</evidence>
<evidence type="ECO:0000305" key="13">
    <source>
    </source>
</evidence>
<evidence type="ECO:0000305" key="14">
    <source>
    </source>
</evidence>
<evidence type="ECO:0000305" key="15">
    <source>
    </source>
</evidence>
<evidence type="ECO:0000305" key="16">
    <source>
    </source>
</evidence>
<evidence type="ECO:0007744" key="17">
    <source>
        <dbReference type="PDB" id="5MGA"/>
    </source>
</evidence>
<evidence type="ECO:0007744" key="18">
    <source>
        <dbReference type="PDB" id="5NFV"/>
    </source>
</evidence>
<evidence type="ECO:0007744" key="19">
    <source>
        <dbReference type="PDB" id="5NG6"/>
    </source>
</evidence>
<evidence type="ECO:0007829" key="20">
    <source>
        <dbReference type="PDB" id="5MGA"/>
    </source>
</evidence>
<evidence type="ECO:0007829" key="21">
    <source>
        <dbReference type="PDB" id="5NFV"/>
    </source>
</evidence>
<evidence type="ECO:0007829" key="22">
    <source>
        <dbReference type="PDB" id="5NG6"/>
    </source>
</evidence>
<evidence type="ECO:0007829" key="23">
    <source>
        <dbReference type="PDB" id="6GTG"/>
    </source>
</evidence>
<evidence type="ECO:0007829" key="24">
    <source>
        <dbReference type="PDB" id="6I1K"/>
    </source>
</evidence>
<evidence type="ECO:0007829" key="25">
    <source>
        <dbReference type="PDB" id="6I1L"/>
    </source>
</evidence>
<reference key="1">
    <citation type="journal article" date="2007" name="Genome Biol.">
        <title>Comparison of Francisella tularensis genomes reveals evolutionary events associated with the emergence of human pathogenic strains.</title>
        <authorList>
            <person name="Rohmer L."/>
            <person name="Fong C."/>
            <person name="Abmayr S."/>
            <person name="Wasnick M."/>
            <person name="Larson Freeman T.J."/>
            <person name="Radey M."/>
            <person name="Guina T."/>
            <person name="Svensson K."/>
            <person name="Hayden H.S."/>
            <person name="Jacobs M."/>
            <person name="Gallagher L.A."/>
            <person name="Manoil C."/>
            <person name="Ernst R.K."/>
            <person name="Drees B."/>
            <person name="Buckley D."/>
            <person name="Haugen E."/>
            <person name="Bovee D."/>
            <person name="Zhou Y."/>
            <person name="Chang J."/>
            <person name="Levy R."/>
            <person name="Lim R."/>
            <person name="Gillett W."/>
            <person name="Guenthener D."/>
            <person name="Kang A."/>
            <person name="Shaffer S.A."/>
            <person name="Taylor G."/>
            <person name="Chen J."/>
            <person name="Gallis B."/>
            <person name="D'Argenio D.A."/>
            <person name="Forsman M."/>
            <person name="Olson M.V."/>
            <person name="Goodlett D.R."/>
            <person name="Kaul R."/>
            <person name="Miller S.I."/>
            <person name="Brittnacher M.J."/>
        </authorList>
    </citation>
    <scope>NUCLEOTIDE SEQUENCE [LARGE SCALE GENOMIC DNA]</scope>
    <source>
        <strain>U112</strain>
    </source>
</reference>
<reference key="2">
    <citation type="journal article" date="2015" name="Cell">
        <title>Cpf1 is a single RNA-guided endonuclease of a class 2 CRISPR-Cas system.</title>
        <authorList>
            <person name="Zetsche B."/>
            <person name="Gootenberg J.S."/>
            <person name="Abudayyeh O.O."/>
            <person name="Slaymaker I.M."/>
            <person name="Makarova K.S."/>
            <person name="Essletzbichler P."/>
            <person name="Volz S.E."/>
            <person name="Joung J."/>
            <person name="van der Oost J."/>
            <person name="Regev A."/>
            <person name="Koonin E.V."/>
            <person name="Zhang F."/>
        </authorList>
    </citation>
    <scope>FUNCTION IN PLASMID RESISTANCE</scope>
    <scope>FUNCTION IN CRRNA FORMATION</scope>
    <scope>FUNCTION AS AN ENDONUCLEASE</scope>
    <scope>POSSIBLE ACTIVE SITE</scope>
    <scope>COFACTOR</scope>
    <scope>POSSIBLE SUBUNIT</scope>
    <scope>MUTAGENESIS OF ASP-917; GLU-1006 AND ASP-1255</scope>
    <source>
        <strain>U112</strain>
    </source>
</reference>
<reference key="3">
    <citation type="journal article" date="2015" name="Mol. Cell">
        <title>Discovery and functional characterization of diverse class 2 CRISPR-Cas systems.</title>
        <authorList>
            <person name="Shmakov S."/>
            <person name="Abudayyeh O.O."/>
            <person name="Makarova K.S."/>
            <person name="Wolf Y.I."/>
            <person name="Gootenberg J.S."/>
            <person name="Semenova E."/>
            <person name="Minakhin L."/>
            <person name="Joung J."/>
            <person name="Konermann S."/>
            <person name="Severinov K."/>
            <person name="Zhang F."/>
            <person name="Koonin E.V."/>
        </authorList>
    </citation>
    <scope>DISCUSSION OF SEQUENCE</scope>
</reference>
<reference key="4">
    <citation type="journal article" date="2016" name="Nature">
        <title>The CRISPR-associated DNA-cleaving enzyme Cpf1 also processes precursor CRISPR RNA.</title>
        <authorList>
            <person name="Fonfara I."/>
            <person name="Richter H."/>
            <person name="Bratovic M."/>
            <person name="Le Rhun A."/>
            <person name="Charpentier E."/>
        </authorList>
    </citation>
    <scope>FUNCTION IN CRRNA PROCESSING</scope>
    <scope>FUNCTION AS AN ENDORIBONUCLEASE</scope>
    <scope>FUNCTION AS AN ENDONUCLEASE</scope>
    <scope>COFACTOR</scope>
    <scope>SUBUNIT</scope>
    <scope>MUTAGENESIS OF HIS-843; LYS-852; LYS-869; PHE-873; ASP-917; GLU-920; HIS-922; TYR-925; GLU-1006; TYR-1024; GLU-1028; ASP-1227 AND ASP-1255</scope>
    <scope>DNA-BINDING</scope>
    <scope>RNA-BINDING</scope>
    <source>
        <strain>U112</strain>
    </source>
</reference>
<reference key="5">
    <citation type="journal article" date="2016" name="Sci. Rep.">
        <title>Efficient targeted mutagenesis of rice and tobacco genomes using Cpf1 from Francisella novicida.</title>
        <authorList>
            <person name="Endo A."/>
            <person name="Masafumi M."/>
            <person name="Kaya H."/>
            <person name="Toki S."/>
        </authorList>
    </citation>
    <scope>BIOTECHNOLOGY</scope>
</reference>
<reference key="6">
    <citation type="journal article" date="2016" name="Nat. Biotechnol.">
        <title>Genome-wide analysis reveals specificities of Cpf1 endonucleases in human cells.</title>
        <authorList>
            <person name="Kim D."/>
            <person name="Kim J."/>
            <person name="Hur J.K."/>
            <person name="Been K.W."/>
            <person name="Yoon S.H."/>
            <person name="Kim J.S."/>
        </authorList>
    </citation>
    <scope>BIOTECHNOLOGY</scope>
</reference>
<reference key="7">
    <citation type="journal article" date="2017" name="Nat. Rev. Microbiol.">
        <title>Diversity and evolution of class 2 CRISPR-Cas systems.</title>
        <authorList>
            <person name="Shmakov S."/>
            <person name="Smargon A."/>
            <person name="Scott D."/>
            <person name="Cox D."/>
            <person name="Pyzocha N."/>
            <person name="Yan W."/>
            <person name="Abudayyeh O.O."/>
            <person name="Gootenberg J.S."/>
            <person name="Makarova K.S."/>
            <person name="Wolf Y.I."/>
            <person name="Severinov K."/>
            <person name="Zhang F."/>
            <person name="Koonin E.V."/>
        </authorList>
    </citation>
    <scope>NOMENCLATURE</scope>
</reference>
<reference key="8">
    <citation type="journal article" date="2023" name="Nat. Commun.">
        <title>Assessing and advancing the safety of CRISPR-Cas tools: from DNA to RNA editing.</title>
        <authorList>
            <person name="Tao J."/>
            <person name="Bauer D.E."/>
            <person name="Chiarle R."/>
        </authorList>
    </citation>
    <scope>REVIEW ON SAFETY OF GENOME EDITING TOOLS</scope>
</reference>
<reference evidence="18 19" key="9">
    <citation type="journal article" date="2017" name="Mol. Cell">
        <title>Structural basis for guide RNA processing and seed-dependent DNA targeting by CRISPR-Cas12a.</title>
        <authorList>
            <person name="Swarts D.C."/>
            <person name="van der Oost J."/>
            <person name="Jinek M."/>
        </authorList>
    </citation>
    <scope>X-RAY CRYSTALLOGRAPHY (2.50 ANGSTROMS) OF 2-1300 IN COMPLEX WITH GUIDE RNA WITH AND WITHOUT TARGET DNA</scope>
    <scope>FUNCTION IN CRRNA PROCESSING</scope>
    <scope>FUNCTION AS AN ENDONUCLEASE</scope>
    <scope>ACTIVE SITE</scope>
    <scope>CATALYTIC ACTIVITY</scope>
    <scope>REACTION MECHANISM</scope>
    <scope>COFACTOR</scope>
    <scope>SUBUNIT</scope>
    <scope>DOMAIN</scope>
    <scope>MUTAGENESIS OF ARG-692; 689-THR--SER-702; GLN-704; ASP-917; GLU-1006; ARG-1218 AND ASP-1255</scope>
    <scope>DNA-BINDING</scope>
    <scope>RNA-BINDING</scope>
    <source>
        <strain>U112</strain>
    </source>
</reference>
<reference evidence="17" key="10">
    <citation type="journal article" date="2017" name="Nature">
        <title>Structure of the Cpf1 endonuclease R-loop complex after target DNA cleavage.</title>
        <authorList>
            <person name="Stella S."/>
            <person name="Alcon P."/>
            <person name="Montoya G."/>
        </authorList>
    </citation>
    <scope>X-RAY CRYSTALLOGRAPHY (3.00 ANGSTROMS) IN COMPLEX WITH GUIDE RNA AND PRODUCT DNA</scope>
    <scope>FUNCTION AS AN ENDONUCLEASE</scope>
    <scope>COFACTOR</scope>
    <scope>DOMAIN</scope>
    <scope>MUTAGENESIS OF GLY-608; PRO-663; ASN-666; LYS-667; LYS-671; LYS-677; ARG-692; HIS-694; GLU-1006; 1065-LYS-LYS-1066 AND ARG-1218</scope>
    <scope>DNA-BINDING</scope>
    <scope>RNA-BINDING</scope>
    <source>
        <strain>U112</strain>
    </source>
</reference>
<reference key="11">
    <citation type="journal article" date="2017" name="Nature">
        <title>Structure of the Cpf1 endonuclease R-loop complex after target DNA cleavage.</title>
        <authorList>
            <person name="Stella S."/>
            <person name="Alcon P."/>
            <person name="Montoya G."/>
        </authorList>
    </citation>
    <scope>ERRATUM OF PUBMED:28562584</scope>
</reference>
<proteinExistence type="evidence at protein level"/>
<name>CS12A_FRATN</name>
<protein>
    <recommendedName>
        <fullName evidence="9">CRISPR-associated endonuclease Cas12a</fullName>
        <ecNumber evidence="6">3.1.21.1</ecNumber>
        <ecNumber evidence="6">4.6.1.22</ecNumber>
    </recommendedName>
    <alternativeName>
        <fullName evidence="8">CRISPR-associated endonuclease Cpf1</fullName>
    </alternativeName>
    <alternativeName>
        <fullName evidence="10">FnCas12a</fullName>
    </alternativeName>
    <alternativeName>
        <fullName evidence="8">FnCpf1</fullName>
    </alternativeName>
</protein>
<feature type="chain" id="PRO_0000434902" description="CRISPR-associated endonuclease Cas12a">
    <location>
        <begin position="1"/>
        <end position="1300"/>
    </location>
</feature>
<feature type="region of interest" description="Wedge region 1" evidence="10 11">
    <location>
        <begin position="1"/>
        <end position="24"/>
    </location>
</feature>
<feature type="region of interest" description="Recognition domain 1" evidence="10 11">
    <location>
        <begin position="25"/>
        <end position="339"/>
    </location>
</feature>
<feature type="region of interest" description="Binds crRNA alone and in crRNA-target DNA heteroduplex" evidence="6 7">
    <location>
        <begin position="47"/>
        <end position="51"/>
    </location>
</feature>
<feature type="region of interest" description="Binds crRNA alone and in crRNA-target DNA heteroduplex" evidence="6 7">
    <location>
        <begin position="182"/>
        <end position="186"/>
    </location>
</feature>
<feature type="region of interest" description="Binds DNA in crRNA-target DNA heteroduplex" evidence="6">
    <location>
        <begin position="301"/>
        <end position="305"/>
    </location>
</feature>
<feature type="region of interest" description="Binds crRNA in crRNA-target DNA heteroduplex" evidence="6 7">
    <location>
        <begin position="326"/>
        <end position="329"/>
    </location>
</feature>
<feature type="region of interest" description="Recognition domain 2" evidence="10 11">
    <location>
        <begin position="340"/>
        <end position="591"/>
    </location>
</feature>
<feature type="region of interest" description="Binds crRNA in crRNA-target DNA heteroduplex" evidence="6">
    <location>
        <begin position="538"/>
        <end position="541"/>
    </location>
</feature>
<feature type="region of interest" description="Binds crRNA" evidence="6">
    <location>
        <begin position="591"/>
        <end position="595"/>
    </location>
</feature>
<feature type="region of interest" description="Wedge region 2" evidence="10 11">
    <location>
        <begin position="592"/>
        <end position="662"/>
    </location>
</feature>
<feature type="region of interest" description="LKL, important for PAM recognition and DNA unwinding" evidence="16">
    <location>
        <begin position="662"/>
        <end position="679"/>
    </location>
</feature>
<feature type="region of interest" description="PAM-interacting domain (PI)" evidence="10 11">
    <location>
        <begin position="663"/>
        <end position="762"/>
    </location>
</feature>
<feature type="region of interest" description="Binds DNA protospacer adjacent motif (PAM) on target DNA" evidence="6 7">
    <location>
        <begin position="671"/>
        <end position="677"/>
    </location>
</feature>
<feature type="region of interest" description="Binds single-strand non-target DNA" evidence="6">
    <location>
        <begin position="692"/>
        <end position="704"/>
    </location>
</feature>
<feature type="region of interest" description="Wedge region 3" evidence="10 11">
    <location>
        <begin position="763"/>
        <end position="892"/>
    </location>
</feature>
<feature type="region of interest" description="Binds crRNA" evidence="6">
    <location>
        <begin position="791"/>
        <end position="794"/>
    </location>
</feature>
<feature type="region of interest" description="Binds crRNA" evidence="6">
    <location>
        <begin position="803"/>
        <end position="804"/>
    </location>
</feature>
<feature type="region of interest" description="Binds crRNA" evidence="6 7">
    <location>
        <begin position="851"/>
        <end position="853"/>
    </location>
</feature>
<feature type="region of interest" description="Binds crRNA" evidence="6 7">
    <location>
        <begin position="865"/>
        <end position="873"/>
    </location>
</feature>
<feature type="region of interest" description="RuvC-I" evidence="10 11">
    <location>
        <begin position="893"/>
        <end position="953"/>
    </location>
</feature>
<feature type="region of interest" description="Bridge helix" evidence="10 11">
    <location>
        <begin position="954"/>
        <end position="971"/>
    </location>
</feature>
<feature type="region of interest" description="RuvC-II" evidence="10 11">
    <location>
        <begin position="972"/>
        <end position="1078"/>
    </location>
</feature>
<feature type="region of interest" description="Nuclease domain" evidence="10 11">
    <location>
        <begin position="1079"/>
        <end position="1254"/>
    </location>
</feature>
<feature type="region of interest" description="RuvC-III" evidence="10 11">
    <location>
        <begin position="1255"/>
        <end position="1300"/>
    </location>
</feature>
<feature type="active site" description="For pre-crRNA processing" evidence="15">
    <location>
        <position position="843"/>
    </location>
</feature>
<feature type="active site" description="For pre-crRNA processing" evidence="15">
    <location>
        <position position="852"/>
    </location>
</feature>
<feature type="active site" description="For pre-crRNA processing" evidence="15">
    <location>
        <position position="869"/>
    </location>
</feature>
<feature type="active site" description="For DNase activity of RuvC domain" evidence="12">
    <location>
        <position position="917"/>
    </location>
</feature>
<feature type="active site" description="For DNase activity of RuvC domain" evidence="12">
    <location>
        <position position="1006"/>
    </location>
</feature>
<feature type="active site" description="For DNase activity of RuvC domain" evidence="12">
    <location>
        <position position="1255"/>
    </location>
</feature>
<feature type="site" description="Binds crRNA alone and in crRNA-target DNA heteroduplex" evidence="6 7">
    <location>
        <position position="16"/>
    </location>
</feature>
<feature type="site" description="Binds target strand DNA" evidence="6">
    <location>
        <position position="131"/>
    </location>
</feature>
<feature type="site" description="Binds crRNA in crRNA-target DNA heteroduplex" evidence="6">
    <location>
        <position position="295"/>
    </location>
</feature>
<feature type="site" description="Binds DNA in crRNA-target DNA heteroduplex" evidence="6">
    <location>
        <position position="320"/>
    </location>
</feature>
<feature type="site" description="Binds DNA in crRNA-target DNA heteroduplex" evidence="6">
    <location>
        <position position="334"/>
    </location>
</feature>
<feature type="site" description="Caps the crRNA-target DNA heteroduplex" evidence="15">
    <location>
        <position position="410"/>
    </location>
</feature>
<feature type="site" description="Binds DNA in crRNA-target DNA heteroduplex" evidence="6">
    <location>
        <position position="589"/>
    </location>
</feature>
<feature type="site" description="Binds DNA protospacer adjacent motif (PAM)" evidence="6 7">
    <location>
        <position position="613"/>
    </location>
</feature>
<feature type="site" description="Binds Target strand DNA" evidence="6">
    <location>
        <position position="667"/>
    </location>
</feature>
<feature type="site" description="Binds PAM" evidence="6 7">
    <location>
        <position position="671"/>
    </location>
</feature>
<feature type="site" description="Binds Target strand DNA" evidence="6 7">
    <location>
        <position position="677"/>
    </location>
</feature>
<feature type="site" description="Binds Target strand DNA" evidence="6 7">
    <location>
        <position position="823"/>
    </location>
</feature>
<feature type="site" description="Binds Target strand DNA; via amide nitrogen" evidence="6 7">
    <location>
        <position position="826"/>
    </location>
</feature>
<feature type="site" description="Binds crRNA" evidence="6">
    <location>
        <position position="833"/>
    </location>
</feature>
<feature type="site" description="Stabilizes transition state for pre-crRNA processing" evidence="15">
    <location>
        <position position="852"/>
    </location>
</feature>
<feature type="site" description="Binds DNA in crRNA-target DNA heteroduplex" evidence="6 7">
    <location>
        <position position="1026"/>
    </location>
</feature>
<feature type="site" description="Binds DNA in crRNA-target DNA heteroduplex" evidence="6 7">
    <location>
        <position position="1063"/>
    </location>
</feature>
<feature type="mutagenesis site" description="15% DNA cleavage." evidence="7">
    <original>G</original>
    <variation>A</variation>
    <variation>E</variation>
    <location>
        <position position="608"/>
    </location>
</feature>
<feature type="mutagenesis site" description="25% DNA cleavage, altered non-target strand cleavage products." evidence="7">
    <original>P</original>
    <variation>A</variation>
    <location>
        <position position="663"/>
    </location>
</feature>
<feature type="mutagenesis site" description="80% DNA cleavage, altered non-target strand cleavage products." evidence="7">
    <original>N</original>
    <variation>A</variation>
    <location>
        <position position="666"/>
    </location>
</feature>
<feature type="mutagenesis site" description="30% DNA cleavage." evidence="7">
    <original>K</original>
    <variation>A</variation>
    <location>
        <position position="667"/>
    </location>
</feature>
<feature type="mutagenesis site" description="15% DNA cleavage." evidence="7">
    <original>K</original>
    <variation>A</variation>
    <location>
        <position position="671"/>
    </location>
</feature>
<feature type="mutagenesis site" description="35% DNA cleavage, altered non-target strand cleavage products." evidence="7">
    <original>K</original>
    <variation>A</variation>
    <location>
        <position position="677"/>
    </location>
</feature>
<feature type="mutagenesis site" description="Slight decrease in target DNA cleavage, 30% DNA cleavage, altered non-target strand cleavage products." evidence="6 7">
    <original>R</original>
    <variation>A</variation>
    <location>
        <position position="692"/>
    </location>
</feature>
<feature type="mutagenesis site" description="Wild-type DNA cleavage, altered non-target strand cleavage products." evidence="7">
    <original>H</original>
    <variation>A</variation>
    <location>
        <position position="694"/>
    </location>
</feature>
<feature type="mutagenesis site" description="Loss of target DNA cleavage." evidence="6">
    <original>TKNGS</original>
    <variation>AGGGG</variation>
    <location>
        <begin position="698"/>
        <end position="702"/>
    </location>
</feature>
<feature type="mutagenesis site" description="Significant decrease in target DNA cleavage." evidence="6">
    <original>Q</original>
    <variation>A</variation>
    <location>
        <position position="704"/>
    </location>
</feature>
<feature type="mutagenesis site" description="Decreased pre-crRNA processing in vitro, binds RNA, no change in DNA cleavage." evidence="3">
    <original>H</original>
    <variation>A</variation>
    <location>
        <position position="843"/>
    </location>
</feature>
<feature type="mutagenesis site" description="Decreased pre-crRNA processing in vitro, binds RNA, no change in DNA cleavage." evidence="3">
    <original>K</original>
    <variation>A</variation>
    <location>
        <position position="852"/>
    </location>
</feature>
<feature type="mutagenesis site" description="Decreased pre-crRNA processing in vitro, binds RNA, no change in DNA cleavage." evidence="3">
    <original>K</original>
    <variation>A</variation>
    <location>
        <position position="869"/>
    </location>
</feature>
<feature type="mutagenesis site" description="Decreased pre-crRNA processing in vitro, no pre-crRNA processing in E.coli, binds RNA, no change in DNA cleavage." evidence="3">
    <original>F</original>
    <variation>A</variation>
    <location>
        <position position="873"/>
    </location>
</feature>
<feature type="mutagenesis site" description="Loss of target and non-target strand DNA cleavage, no change in DNA-binding or pre-crRNA processing." evidence="1 3 6">
    <original>D</original>
    <variation>A</variation>
    <location>
        <position position="917"/>
    </location>
</feature>
<feature type="mutagenesis site" description="No longer cleaves DNA in presence of Ca(2+)." evidence="3">
    <original>E</original>
    <variation>A</variation>
    <location>
        <position position="920"/>
    </location>
</feature>
<feature type="mutagenesis site" description="Decreased cleavage of target strand in presence of Ca(2+), wild-type cleavage of DNA in presence of Mg(2+)." evidence="3">
    <original>H</original>
    <variation>A</variation>
    <location>
        <position position="922"/>
    </location>
</feature>
<feature type="mutagenesis site" description="Decreased cleavage of target strand in presence of Ca(2+), wild-type cleavage of DNA in presence of Mg(2+)." evidence="3">
    <original>Y</original>
    <variation>A</variation>
    <location>
        <position position="925"/>
    </location>
</feature>
<feature type="mutagenesis site" description="Loss of target and non-target strand DNA cleavage, no change in DNA-binding or pre-crRNA processing." evidence="1 3 6 7">
    <original>E</original>
    <variation>A</variation>
    <location>
        <position position="1006"/>
    </location>
</feature>
<feature type="mutagenesis site" description="Complete loss of DNA cleavage, still binds crRNA; when associated with A-1218." evidence="6">
    <original>E</original>
    <variation>Q</variation>
    <location>
        <position position="1006"/>
    </location>
</feature>
<feature type="mutagenesis site" description="No longer cleaves DNA in presence of Ca(2+)." evidence="3">
    <original>Y</original>
    <variation>A</variation>
    <location>
        <position position="1024"/>
    </location>
</feature>
<feature type="mutagenesis site" description="No longer cleaves DNA in presence of Ca(2+), reduced cleavage of non-target strand in presence of Mg(2+)." evidence="3">
    <original>E</original>
    <variation>A</variation>
    <location>
        <position position="1028"/>
    </location>
</feature>
<feature type="mutagenesis site" description="67% DNA cleavage, altered non-target strand cleavage products." evidence="7">
    <original>KK</original>
    <variation>AA</variation>
    <location>
        <begin position="1065"/>
        <end position="1066"/>
    </location>
</feature>
<feature type="mutagenesis site" description="Cleaves both target and non-target strand DNA. Complete loss of DNA cleavage, still binds crRNA; when associated with Q-1006." evidence="6 7">
    <original>R</original>
    <variation>A</variation>
    <location>
        <position position="1218"/>
    </location>
</feature>
<feature type="mutagenesis site" description="No longer cleaves DNA in presence of Ca(2+)." evidence="3">
    <original>D</original>
    <variation>A</variation>
    <location>
        <position position="1227"/>
    </location>
</feature>
<feature type="mutagenesis site" description="Significant reduction to loss of target and non-target strand DNA cleavage, no change in DNA-binding or pre-crRNA processing." evidence="1 3 6">
    <original>D</original>
    <variation>A</variation>
    <location>
        <position position="1255"/>
    </location>
</feature>
<feature type="mutagenesis site" description="Significant reduction of target and non-target strand DNA cleavage." evidence="6">
    <original>D</original>
    <variation>N</variation>
    <location>
        <position position="1255"/>
    </location>
</feature>
<feature type="turn" evidence="21">
    <location>
        <begin position="3"/>
        <end position="6"/>
    </location>
</feature>
<feature type="strand" evidence="21">
    <location>
        <begin position="13"/>
        <end position="23"/>
    </location>
</feature>
<feature type="helix" evidence="21">
    <location>
        <begin position="27"/>
        <end position="34"/>
    </location>
</feature>
<feature type="helix" evidence="21">
    <location>
        <begin position="36"/>
        <end position="68"/>
    </location>
</feature>
<feature type="helix" evidence="21">
    <location>
        <begin position="73"/>
        <end position="86"/>
    </location>
</feature>
<feature type="helix" evidence="21">
    <location>
        <begin position="92"/>
        <end position="114"/>
    </location>
</feature>
<feature type="helix" evidence="21">
    <location>
        <begin position="117"/>
        <end position="120"/>
    </location>
</feature>
<feature type="strand" evidence="21">
    <location>
        <begin position="122"/>
        <end position="124"/>
    </location>
</feature>
<feature type="helix" evidence="21">
    <location>
        <begin position="125"/>
        <end position="127"/>
    </location>
</feature>
<feature type="strand" evidence="25">
    <location>
        <begin position="132"/>
        <end position="134"/>
    </location>
</feature>
<feature type="helix" evidence="21">
    <location>
        <begin position="137"/>
        <end position="147"/>
    </location>
</feature>
<feature type="helix" evidence="21">
    <location>
        <begin position="153"/>
        <end position="155"/>
    </location>
</feature>
<feature type="strand" evidence="24">
    <location>
        <begin position="157"/>
        <end position="159"/>
    </location>
</feature>
<feature type="helix" evidence="21">
    <location>
        <begin position="162"/>
        <end position="171"/>
    </location>
</feature>
<feature type="turn" evidence="21">
    <location>
        <begin position="172"/>
        <end position="174"/>
    </location>
</feature>
<feature type="helix" evidence="21">
    <location>
        <begin position="176"/>
        <end position="179"/>
    </location>
</feature>
<feature type="helix" evidence="21">
    <location>
        <begin position="180"/>
        <end position="190"/>
    </location>
</feature>
<feature type="strand" evidence="24">
    <location>
        <begin position="192"/>
        <end position="194"/>
    </location>
</feature>
<feature type="strand" evidence="22">
    <location>
        <begin position="196"/>
        <end position="198"/>
    </location>
</feature>
<feature type="helix" evidence="21">
    <location>
        <begin position="199"/>
        <end position="204"/>
    </location>
</feature>
<feature type="helix" evidence="21">
    <location>
        <begin position="207"/>
        <end position="224"/>
    </location>
</feature>
<feature type="helix" evidence="21">
    <location>
        <begin position="226"/>
        <end position="228"/>
    </location>
</feature>
<feature type="helix" evidence="21">
    <location>
        <begin position="231"/>
        <end position="237"/>
    </location>
</feature>
<feature type="turn" evidence="21">
    <location>
        <begin position="238"/>
        <end position="242"/>
    </location>
</feature>
<feature type="strand" evidence="21">
    <location>
        <begin position="243"/>
        <end position="245"/>
    </location>
</feature>
<feature type="turn" evidence="21">
    <location>
        <begin position="248"/>
        <end position="251"/>
    </location>
</feature>
<feature type="strand" evidence="25">
    <location>
        <begin position="252"/>
        <end position="257"/>
    </location>
</feature>
<feature type="helix" evidence="21">
    <location>
        <begin position="260"/>
        <end position="263"/>
    </location>
</feature>
<feature type="helix" evidence="21">
    <location>
        <begin position="267"/>
        <end position="271"/>
    </location>
</feature>
<feature type="strand" evidence="21">
    <location>
        <begin position="272"/>
        <end position="274"/>
    </location>
</feature>
<feature type="helix" evidence="21">
    <location>
        <begin position="275"/>
        <end position="286"/>
    </location>
</feature>
<feature type="strand" evidence="20">
    <location>
        <begin position="291"/>
        <end position="293"/>
    </location>
</feature>
<feature type="strand" evidence="22">
    <location>
        <begin position="294"/>
        <end position="297"/>
    </location>
</feature>
<feature type="helix" evidence="21">
    <location>
        <begin position="300"/>
        <end position="311"/>
    </location>
</feature>
<feature type="helix" evidence="21">
    <location>
        <begin position="314"/>
        <end position="319"/>
    </location>
</feature>
<feature type="helix" evidence="21">
    <location>
        <begin position="345"/>
        <end position="361"/>
    </location>
</feature>
<feature type="strand" evidence="24">
    <location>
        <begin position="365"/>
        <end position="367"/>
    </location>
</feature>
<feature type="helix" evidence="21">
    <location>
        <begin position="370"/>
        <end position="382"/>
    </location>
</feature>
<feature type="helix" evidence="22">
    <location>
        <begin position="388"/>
        <end position="390"/>
    </location>
</feature>
<feature type="strand" evidence="21">
    <location>
        <begin position="392"/>
        <end position="394"/>
    </location>
</feature>
<feature type="helix" evidence="21">
    <location>
        <begin position="397"/>
        <end position="406"/>
    </location>
</feature>
<feature type="helix" evidence="21">
    <location>
        <begin position="412"/>
        <end position="422"/>
    </location>
</feature>
<feature type="strand" evidence="23">
    <location>
        <begin position="424"/>
        <end position="426"/>
    </location>
</feature>
<feature type="strand" evidence="25">
    <location>
        <begin position="427"/>
        <end position="432"/>
    </location>
</feature>
<feature type="helix" evidence="24">
    <location>
        <begin position="435"/>
        <end position="445"/>
    </location>
</feature>
<feature type="strand" evidence="21">
    <location>
        <begin position="449"/>
        <end position="452"/>
    </location>
</feature>
<feature type="helix" evidence="21">
    <location>
        <begin position="453"/>
        <end position="465"/>
    </location>
</feature>
<feature type="strand" evidence="21">
    <location>
        <begin position="469"/>
        <end position="471"/>
    </location>
</feature>
<feature type="helix" evidence="21">
    <location>
        <begin position="475"/>
        <end position="484"/>
    </location>
</feature>
<feature type="helix" evidence="21">
    <location>
        <begin position="487"/>
        <end position="506"/>
    </location>
</feature>
<feature type="strand" evidence="25">
    <location>
        <begin position="508"/>
        <end position="510"/>
    </location>
</feature>
<feature type="helix" evidence="21">
    <location>
        <begin position="513"/>
        <end position="515"/>
    </location>
</feature>
<feature type="helix" evidence="21">
    <location>
        <begin position="517"/>
        <end position="519"/>
    </location>
</feature>
<feature type="helix" evidence="21">
    <location>
        <begin position="520"/>
        <end position="541"/>
    </location>
</feature>
<feature type="helix" evidence="21">
    <location>
        <begin position="559"/>
        <end position="572"/>
    </location>
</feature>
<feature type="helix" evidence="21">
    <location>
        <begin position="575"/>
        <end position="586"/>
    </location>
</feature>
<feature type="strand" evidence="21">
    <location>
        <begin position="595"/>
        <end position="597"/>
    </location>
</feature>
<feature type="turn" evidence="21">
    <location>
        <begin position="603"/>
        <end position="606"/>
    </location>
</feature>
<feature type="helix" evidence="21">
    <location>
        <begin position="611"/>
        <end position="613"/>
    </location>
</feature>
<feature type="helix" evidence="21">
    <location>
        <begin position="614"/>
        <end position="617"/>
    </location>
</feature>
<feature type="strand" evidence="21">
    <location>
        <begin position="619"/>
        <end position="624"/>
    </location>
</feature>
<feature type="strand" evidence="21">
    <location>
        <begin position="627"/>
        <end position="633"/>
    </location>
</feature>
<feature type="strand" evidence="24">
    <location>
        <begin position="635"/>
        <end position="637"/>
    </location>
</feature>
<feature type="turn" evidence="24">
    <location>
        <begin position="638"/>
        <end position="641"/>
    </location>
</feature>
<feature type="helix" evidence="21">
    <location>
        <begin position="643"/>
        <end position="648"/>
    </location>
</feature>
<feature type="strand" evidence="21">
    <location>
        <begin position="650"/>
        <end position="661"/>
    </location>
</feature>
<feature type="helix" evidence="21">
    <location>
        <begin position="665"/>
        <end position="673"/>
    </location>
</feature>
<feature type="turn" evidence="21">
    <location>
        <begin position="676"/>
        <end position="678"/>
    </location>
</feature>
<feature type="helix" evidence="21">
    <location>
        <begin position="679"/>
        <end position="682"/>
    </location>
</feature>
<feature type="helix" evidence="21">
    <location>
        <begin position="686"/>
        <end position="694"/>
    </location>
</feature>
<feature type="turn" evidence="21">
    <location>
        <begin position="695"/>
        <end position="697"/>
    </location>
</feature>
<feature type="strand" evidence="25">
    <location>
        <begin position="698"/>
        <end position="700"/>
    </location>
</feature>
<feature type="helix" evidence="25">
    <location>
        <begin position="704"/>
        <end position="706"/>
    </location>
</feature>
<feature type="helix" evidence="21">
    <location>
        <begin position="714"/>
        <end position="730"/>
    </location>
</feature>
<feature type="strand" evidence="24">
    <location>
        <begin position="731"/>
        <end position="733"/>
    </location>
</feature>
<feature type="helix" evidence="21">
    <location>
        <begin position="734"/>
        <end position="737"/>
    </location>
</feature>
<feature type="helix" evidence="21">
    <location>
        <begin position="744"/>
        <end position="746"/>
    </location>
</feature>
<feature type="helix" evidence="21">
    <location>
        <begin position="750"/>
        <end position="760"/>
    </location>
</feature>
<feature type="strand" evidence="21">
    <location>
        <begin position="761"/>
        <end position="769"/>
    </location>
</feature>
<feature type="helix" evidence="21">
    <location>
        <begin position="771"/>
        <end position="779"/>
    </location>
</feature>
<feature type="strand" evidence="21">
    <location>
        <begin position="782"/>
        <end position="789"/>
    </location>
</feature>
<feature type="helix" evidence="21">
    <location>
        <begin position="791"/>
        <end position="793"/>
    </location>
</feature>
<feature type="helix" evidence="21">
    <location>
        <begin position="803"/>
        <end position="812"/>
    </location>
</feature>
<feature type="helix" evidence="21">
    <location>
        <begin position="814"/>
        <end position="818"/>
    </location>
</feature>
<feature type="strand" evidence="21">
    <location>
        <begin position="821"/>
        <end position="824"/>
    </location>
</feature>
<feature type="strand" evidence="21">
    <location>
        <begin position="829"/>
        <end position="833"/>
    </location>
</feature>
<feature type="strand" evidence="23">
    <location>
        <begin position="845"/>
        <end position="847"/>
    </location>
</feature>
<feature type="strand" evidence="20">
    <location>
        <begin position="852"/>
        <end position="856"/>
    </location>
</feature>
<feature type="strand" evidence="21">
    <location>
        <begin position="857"/>
        <end position="861"/>
    </location>
</feature>
<feature type="helix" evidence="21">
    <location>
        <begin position="871"/>
        <end position="874"/>
    </location>
</feature>
<feature type="strand" evidence="21">
    <location>
        <begin position="877"/>
        <end position="887"/>
    </location>
</feature>
<feature type="helix" evidence="23">
    <location>
        <begin position="888"/>
        <end position="890"/>
    </location>
</feature>
<feature type="helix" evidence="21">
    <location>
        <begin position="896"/>
        <end position="906"/>
    </location>
</feature>
<feature type="helix" evidence="21">
    <location>
        <begin position="908"/>
        <end position="910"/>
    </location>
</feature>
<feature type="strand" evidence="21">
    <location>
        <begin position="912"/>
        <end position="917"/>
    </location>
</feature>
<feature type="strand" evidence="23">
    <location>
        <begin position="919"/>
        <end position="921"/>
    </location>
</feature>
<feature type="strand" evidence="21">
    <location>
        <begin position="923"/>
        <end position="929"/>
    </location>
</feature>
<feature type="strand" evidence="24">
    <location>
        <begin position="931"/>
        <end position="933"/>
    </location>
</feature>
<feature type="strand" evidence="21">
    <location>
        <begin position="935"/>
        <end position="944"/>
    </location>
</feature>
<feature type="strand" evidence="24">
    <location>
        <begin position="947"/>
        <end position="952"/>
    </location>
</feature>
<feature type="helix" evidence="21">
    <location>
        <begin position="953"/>
        <end position="968"/>
    </location>
</feature>
<feature type="turn" evidence="21">
    <location>
        <begin position="969"/>
        <end position="971"/>
    </location>
</feature>
<feature type="helix" evidence="21">
    <location>
        <begin position="977"/>
        <end position="999"/>
    </location>
</feature>
<feature type="strand" evidence="21">
    <location>
        <begin position="1001"/>
        <end position="1006"/>
    </location>
</feature>
<feature type="strand" evidence="24">
    <location>
        <begin position="1008"/>
        <end position="1011"/>
    </location>
</feature>
<feature type="helix" evidence="23">
    <location>
        <begin position="1016"/>
        <end position="1018"/>
    </location>
</feature>
<feature type="helix" evidence="21">
    <location>
        <begin position="1019"/>
        <end position="1036"/>
    </location>
</feature>
<feature type="strand" evidence="20">
    <location>
        <begin position="1041"/>
        <end position="1043"/>
    </location>
</feature>
<feature type="strand" evidence="24">
    <location>
        <begin position="1045"/>
        <end position="1047"/>
    </location>
</feature>
<feature type="strand" evidence="24">
    <location>
        <begin position="1050"/>
        <end position="1053"/>
    </location>
</feature>
<feature type="helix" evidence="21">
    <location>
        <begin position="1065"/>
        <end position="1067"/>
    </location>
</feature>
<feature type="strand" evidence="25">
    <location>
        <begin position="1069"/>
        <end position="1071"/>
    </location>
</feature>
<feature type="strand" evidence="21">
    <location>
        <begin position="1074"/>
        <end position="1077"/>
    </location>
</feature>
<feature type="strand" evidence="21">
    <location>
        <begin position="1083"/>
        <end position="1085"/>
    </location>
</feature>
<feature type="turn" evidence="21">
    <location>
        <begin position="1087"/>
        <end position="1089"/>
    </location>
</feature>
<feature type="helix" evidence="21">
    <location>
        <begin position="1102"/>
        <end position="1110"/>
    </location>
</feature>
<feature type="strand" evidence="21">
    <location>
        <begin position="1112"/>
        <end position="1118"/>
    </location>
</feature>
<feature type="turn" evidence="21">
    <location>
        <begin position="1119"/>
        <end position="1122"/>
    </location>
</feature>
<feature type="strand" evidence="21">
    <location>
        <begin position="1123"/>
        <end position="1129"/>
    </location>
</feature>
<feature type="helix" evidence="21">
    <location>
        <begin position="1130"/>
        <end position="1132"/>
    </location>
</feature>
<feature type="strand" evidence="23">
    <location>
        <begin position="1133"/>
        <end position="1135"/>
    </location>
</feature>
<feature type="strand" evidence="25">
    <location>
        <begin position="1136"/>
        <end position="1138"/>
    </location>
</feature>
<feature type="strand" evidence="21">
    <location>
        <begin position="1141"/>
        <end position="1145"/>
    </location>
</feature>
<feature type="strand" evidence="21">
    <location>
        <begin position="1150"/>
        <end position="1153"/>
    </location>
</feature>
<feature type="strand" evidence="23">
    <location>
        <begin position="1157"/>
        <end position="1162"/>
    </location>
</feature>
<feature type="strand" evidence="21">
    <location>
        <begin position="1165"/>
        <end position="1168"/>
    </location>
</feature>
<feature type="helix" evidence="21">
    <location>
        <begin position="1170"/>
        <end position="1180"/>
    </location>
</feature>
<feature type="helix" evidence="21">
    <location>
        <begin position="1192"/>
        <end position="1197"/>
    </location>
</feature>
<feature type="helix" evidence="21">
    <location>
        <begin position="1201"/>
        <end position="1214"/>
    </location>
</feature>
<feature type="strand" evidence="25">
    <location>
        <begin position="1218"/>
        <end position="1220"/>
    </location>
</feature>
<feature type="turn" evidence="22">
    <location>
        <begin position="1222"/>
        <end position="1225"/>
    </location>
</feature>
<feature type="strand" evidence="21">
    <location>
        <begin position="1228"/>
        <end position="1230"/>
    </location>
</feature>
<feature type="strand" evidence="24">
    <location>
        <begin position="1236"/>
        <end position="1238"/>
    </location>
</feature>
<feature type="strand" evidence="21">
    <location>
        <begin position="1242"/>
        <end position="1245"/>
    </location>
</feature>
<feature type="helix" evidence="21">
    <location>
        <begin position="1254"/>
        <end position="1275"/>
    </location>
</feature>
<feature type="strand" evidence="24">
    <location>
        <begin position="1278"/>
        <end position="1280"/>
    </location>
</feature>
<feature type="helix" evidence="21">
    <location>
        <begin position="1288"/>
        <end position="1297"/>
    </location>
</feature>
<dbReference type="EC" id="3.1.21.1" evidence="6"/>
<dbReference type="EC" id="4.6.1.22" evidence="6"/>
<dbReference type="EMBL" id="CP000439">
    <property type="protein sequence ID" value="ABK90267.1"/>
    <property type="molecule type" value="Genomic_DNA"/>
</dbReference>
<dbReference type="RefSeq" id="WP_003040289.1">
    <property type="nucleotide sequence ID" value="NC_008601.1"/>
</dbReference>
<dbReference type="PDB" id="5MGA">
    <property type="method" value="X-ray"/>
    <property type="resolution" value="3.00 A"/>
    <property type="chains" value="A=1-1300"/>
</dbReference>
<dbReference type="PDB" id="5NFV">
    <property type="method" value="X-ray"/>
    <property type="resolution" value="2.50 A"/>
    <property type="chains" value="A=2-1300"/>
</dbReference>
<dbReference type="PDB" id="5NG6">
    <property type="method" value="X-ray"/>
    <property type="resolution" value="3.34 A"/>
    <property type="chains" value="A/C/E/G=2-1300"/>
</dbReference>
<dbReference type="PDB" id="6GTC">
    <property type="method" value="EM"/>
    <property type="resolution" value="3.91 A"/>
    <property type="chains" value="A=1-1300"/>
</dbReference>
<dbReference type="PDB" id="6GTD">
    <property type="method" value="EM"/>
    <property type="resolution" value="4.24 A"/>
    <property type="chains" value="A=1-1300"/>
</dbReference>
<dbReference type="PDB" id="6GTE">
    <property type="method" value="EM"/>
    <property type="resolution" value="4.07 A"/>
    <property type="chains" value="A=1-1300"/>
</dbReference>
<dbReference type="PDB" id="6GTF">
    <property type="method" value="EM"/>
    <property type="resolution" value="3.63 A"/>
    <property type="chains" value="A=1-1300"/>
</dbReference>
<dbReference type="PDB" id="6GTG">
    <property type="method" value="EM"/>
    <property type="resolution" value="3.27 A"/>
    <property type="chains" value="A=1-1300"/>
</dbReference>
<dbReference type="PDB" id="6I1K">
    <property type="method" value="X-ray"/>
    <property type="resolution" value="2.65 A"/>
    <property type="chains" value="A=2-1300"/>
</dbReference>
<dbReference type="PDB" id="6I1L">
    <property type="method" value="X-ray"/>
    <property type="resolution" value="2.98 A"/>
    <property type="chains" value="A/D=2-1300"/>
</dbReference>
<dbReference type="PDB" id="8Y0B">
    <property type="method" value="X-ray"/>
    <property type="resolution" value="2.30 A"/>
    <property type="chains" value="A=1-1300"/>
</dbReference>
<dbReference type="PDB" id="8Y0C">
    <property type="method" value="X-ray"/>
    <property type="resolution" value="3.45 A"/>
    <property type="chains" value="A=1-1300"/>
</dbReference>
<dbReference type="PDBsum" id="5MGA"/>
<dbReference type="PDBsum" id="5NFV"/>
<dbReference type="PDBsum" id="5NG6"/>
<dbReference type="PDBsum" id="6GTC"/>
<dbReference type="PDBsum" id="6GTD"/>
<dbReference type="PDBsum" id="6GTE"/>
<dbReference type="PDBsum" id="6GTF"/>
<dbReference type="PDBsum" id="6GTG"/>
<dbReference type="PDBsum" id="6I1K"/>
<dbReference type="PDBsum" id="6I1L"/>
<dbReference type="PDBsum" id="8Y0B"/>
<dbReference type="PDBsum" id="8Y0C"/>
<dbReference type="EMDB" id="EMD-0061"/>
<dbReference type="EMDB" id="EMD-0062"/>
<dbReference type="EMDB" id="EMD-0063"/>
<dbReference type="EMDB" id="EMD-0064"/>
<dbReference type="EMDB" id="EMD-0065"/>
<dbReference type="SMR" id="A0Q7Q2"/>
<dbReference type="KEGG" id="ftn:FTN_1397"/>
<dbReference type="KEGG" id="ftx:AW25_605"/>
<dbReference type="BioCyc" id="FTUL401614:G1G75-1444-MONOMER"/>
<dbReference type="Proteomes" id="UP000000762">
    <property type="component" value="Chromosome"/>
</dbReference>
<dbReference type="GO" id="GO:0004530">
    <property type="term" value="F:deoxyribonuclease I activity"/>
    <property type="evidence" value="ECO:0007669"/>
    <property type="project" value="UniProtKB-EC"/>
</dbReference>
<dbReference type="GO" id="GO:0003677">
    <property type="term" value="F:DNA binding"/>
    <property type="evidence" value="ECO:0007669"/>
    <property type="project" value="UniProtKB-KW"/>
</dbReference>
<dbReference type="GO" id="GO:0016829">
    <property type="term" value="F:lyase activity"/>
    <property type="evidence" value="ECO:0007669"/>
    <property type="project" value="UniProtKB-KW"/>
</dbReference>
<dbReference type="GO" id="GO:0003723">
    <property type="term" value="F:RNA binding"/>
    <property type="evidence" value="ECO:0007669"/>
    <property type="project" value="UniProtKB-KW"/>
</dbReference>
<dbReference type="GO" id="GO:0051607">
    <property type="term" value="P:defense response to virus"/>
    <property type="evidence" value="ECO:0007669"/>
    <property type="project" value="UniProtKB-KW"/>
</dbReference>
<dbReference type="InterPro" id="IPR027620">
    <property type="entry name" value="Cas12a"/>
</dbReference>
<dbReference type="InterPro" id="IPR040882">
    <property type="entry name" value="Cas12a_NUC"/>
</dbReference>
<dbReference type="InterPro" id="IPR053993">
    <property type="entry name" value="Cas12a_PI"/>
</dbReference>
<dbReference type="InterPro" id="IPR040787">
    <property type="entry name" value="Cas12a_REC1"/>
</dbReference>
<dbReference type="InterPro" id="IPR054116">
    <property type="entry name" value="Cas12a_REC2"/>
</dbReference>
<dbReference type="InterPro" id="IPR040852">
    <property type="entry name" value="RuvC_1"/>
</dbReference>
<dbReference type="NCBIfam" id="TIGR04330">
    <property type="entry name" value="cas_Cpf1"/>
    <property type="match status" value="1"/>
</dbReference>
<dbReference type="Pfam" id="PF21918">
    <property type="entry name" value="cas_Cpf1_2nd"/>
    <property type="match status" value="1"/>
</dbReference>
<dbReference type="Pfam" id="PF22222">
    <property type="entry name" value="Cpf1_PI-like"/>
    <property type="match status" value="1"/>
</dbReference>
<dbReference type="Pfam" id="PF18510">
    <property type="entry name" value="NUC"/>
    <property type="match status" value="1"/>
</dbReference>
<dbReference type="Pfam" id="PF18501">
    <property type="entry name" value="REC1"/>
    <property type="match status" value="1"/>
</dbReference>
<dbReference type="Pfam" id="PF18516">
    <property type="entry name" value="RuvC_1"/>
    <property type="match status" value="1"/>
</dbReference>
<keyword id="KW-0002">3D-structure</keyword>
<keyword id="KW-0051">Antiviral defense</keyword>
<keyword id="KW-0106">Calcium</keyword>
<keyword id="KW-0238">DNA-binding</keyword>
<keyword id="KW-0255">Endonuclease</keyword>
<keyword id="KW-0378">Hydrolase</keyword>
<keyword id="KW-0456">Lyase</keyword>
<keyword id="KW-0460">Magnesium</keyword>
<keyword id="KW-0540">Nuclease</keyword>
<keyword id="KW-0694">RNA-binding</keyword>
<comment type="function">
    <text evidence="1 3 6 7">CRISPR (clustered regularly interspaced short palindromic repeat), is an adaptive immune system that provides protection against mobile genetic elements (viruses, transposable elements and conjugative plasmids). CRISPR clusters contain sequences complementary to antecedent mobile elements and target invading nucleic acids. CRISPR clusters are transcribed and processed into CRISPR RNA (crRNA). Has endonuclease activity on pre-crRNA and dsDNA, using different active sites. A single-RNA guided endonuclease that is also capable of guiding crRNA processing; correct processing of pre-crRNA requires only this protein and the CRISPR locus (PubMed:26422227, PubMed:27096362). pre-crRNA processing proceeds by an intramolecular nucleophilic attack on the scissile phosphate by the 2'-OH of the upstream ribonucleotide, the divalent cation (which is bound by the crRNA) is probably required for ordering the crRNA pseudoknot and/or increasing RNA binding (PubMed:28431230). RNA mutagenesis studies show pre-crRNA cleavage is highly sequence- and structure-specific (PubMed:27096362). Forms a complex with crRNA and complementary dsDNA, where the crRNA displaces the non-target DNA strand and directs endonucleolytic cleavage of both strands of the DNA (PubMed:26422227, PubMed:27096362, PubMed:28431230). Cleavage results in staggered 5-base 5' overhangs 14-18 and 21-23 bases downstream of the PAM (protospacer adjacent motif) on the non-target and target strands respectively (PubMed:26422227, PubMed:28431230, PubMed:28562584). Both target and non-target strand DNA are probably independently cleaved in the same active site (PubMed:28431230, PubMed:28562584). When this protein is expressed in E.coli it prevents plasmids homologous to the first CRISPR spacer from transforming, formally showing it is responsible for plasmid immunity (PubMed:26422227).</text>
</comment>
<comment type="catalytic activity">
    <reaction evidence="6">
        <text>Endonucleolytic cleavage to 5'-phosphodinucleotide and 5'-phosphooligonucleotide end-products.</text>
        <dbReference type="EC" id="3.1.21.1"/>
    </reaction>
</comment>
<comment type="catalytic activity">
    <reaction evidence="6">
        <text>RNA = a 5'-hydroxy-ribonucleotide + n nucleoside-2',3'-cyclophosphates.</text>
        <dbReference type="EC" id="4.6.1.22"/>
    </reaction>
</comment>
<comment type="cofactor">
    <cofactor evidence="2">
        <name>Ca(2+)</name>
        <dbReference type="ChEBI" id="CHEBI:29108"/>
    </cofactor>
    <cofactor evidence="1 2 3 7">
        <name>Mg(2+)</name>
        <dbReference type="ChEBI" id="CHEBI:18420"/>
    </cofactor>
    <text evidence="1 2 3 6 7">Cleavage of dsDNA requires Mg(2+) (PubMed:26422227, PubMed:28562584). Another report shows DNA cleavage occurs equally well in the presence of Ca(2+) or Mg(2+) (PubMed:27096362). Processing of pre-crRNA requires a divalent cation, preferably Mg(2+) which is bound by the crRNA (PubMed:26593719, PubMed:28431230).</text>
</comment>
<comment type="subunit">
    <text evidence="1 3 6">Might be a homodimer (PubMed:26422227). Might be a monomer (PubMed:27096362, PubMed:28431230).</text>
</comment>
<comment type="domain">
    <text evidence="6 7">Has bilobed structure, with the REC lobe (residues 25-591) connected to the NUC lobe (662-1300) by a discontinuous wedge domain (PubMed:28431230, PubMed:28562584). The REC lobe binds the (pre-)crRNA and the crRNA-target DNA heteroduplex (PubMed:28431230, PubMed:28562584). The heteroduplex as well as part of the DNA downstream of the heteroduplex is protected in the central cavity formed by the NUC and REC lobes, which also positions target and non-target DNA for cleavage after domain rearrangement (PubMed:28431230, PubMed:28562584). The LKL region (residues 662 to 679) inserts into target dsDNA initiating its disruption to allow crRNA hybridization, is also involved in determining the non-target strand cleavage site (PubMed:28562584). A 'septum' formed by residues 197-204 and 1061-1070 separates the 2 DNA strands, preventing their reannealing, this region also influences the non-target cleavage site (PubMed:28562584).</text>
</comment>
<comment type="biotechnology">
    <text evidence="4 5 12">This class of CRISPR enzymes recognize a 5' T-rich protospacer adjacent motif (PAM, TTN for this specific enzyme), unlike Cas9 enzymes which recognize 3' G-rich PAMs, thus this enzyme increases the possibilites for genome editing (PubMed:26422227). The simplicity of the Cas12a-crRNA directed DNA endonuclease activity has been used to target and modify DNA sequences in rice and tobacco (PubMed:27905529).</text>
</comment>
<comment type="miscellaneous">
    <text evidence="13 14">Part of a type V-A CRISPR-Cas system.</text>
</comment>
<comment type="similarity">
    <text evidence="14">Belongs to the CRISPR-associated endonuclease Cas12a family.</text>
</comment>